<dbReference type="EMBL" id="AE000783">
    <property type="protein sequence ID" value="AAC66844.1"/>
    <property type="molecule type" value="Genomic_DNA"/>
</dbReference>
<dbReference type="PIR" id="A70162">
    <property type="entry name" value="A70162"/>
</dbReference>
<dbReference type="RefSeq" id="NP_212632.1">
    <property type="nucleotide sequence ID" value="NC_001318.1"/>
</dbReference>
<dbReference type="RefSeq" id="WP_002665241.1">
    <property type="nucleotide sequence ID" value="NC_001318.1"/>
</dbReference>
<dbReference type="SMR" id="O51451"/>
<dbReference type="STRING" id="224326.BB_0498"/>
<dbReference type="PaxDb" id="224326-BB_0498"/>
<dbReference type="EnsemblBacteria" id="AAC66844">
    <property type="protein sequence ID" value="AAC66844"/>
    <property type="gene ID" value="BB_0498"/>
</dbReference>
<dbReference type="KEGG" id="bbu:BB_0498"/>
<dbReference type="PATRIC" id="fig|224326.49.peg.889"/>
<dbReference type="HOGENOM" id="CLU_030313_0_0_12"/>
<dbReference type="OrthoDB" id="9809248at2"/>
<dbReference type="Proteomes" id="UP000001807">
    <property type="component" value="Chromosome"/>
</dbReference>
<dbReference type="GO" id="GO:0005886">
    <property type="term" value="C:plasma membrane"/>
    <property type="evidence" value="ECO:0007669"/>
    <property type="project" value="UniProtKB-SubCell"/>
</dbReference>
<dbReference type="GO" id="GO:0065002">
    <property type="term" value="P:intracellular protein transmembrane transport"/>
    <property type="evidence" value="ECO:0007669"/>
    <property type="project" value="UniProtKB-UniRule"/>
</dbReference>
<dbReference type="GO" id="GO:0006605">
    <property type="term" value="P:protein targeting"/>
    <property type="evidence" value="ECO:0007669"/>
    <property type="project" value="UniProtKB-UniRule"/>
</dbReference>
<dbReference type="GO" id="GO:0043952">
    <property type="term" value="P:protein transport by the Sec complex"/>
    <property type="evidence" value="ECO:0007669"/>
    <property type="project" value="UniProtKB-UniRule"/>
</dbReference>
<dbReference type="Gene3D" id="1.10.3370.10">
    <property type="entry name" value="SecY subunit domain"/>
    <property type="match status" value="1"/>
</dbReference>
<dbReference type="HAMAP" id="MF_01465">
    <property type="entry name" value="SecY"/>
    <property type="match status" value="1"/>
</dbReference>
<dbReference type="InterPro" id="IPR026593">
    <property type="entry name" value="SecY"/>
</dbReference>
<dbReference type="InterPro" id="IPR002208">
    <property type="entry name" value="SecY/SEC61-alpha"/>
</dbReference>
<dbReference type="InterPro" id="IPR030659">
    <property type="entry name" value="SecY_CS"/>
</dbReference>
<dbReference type="InterPro" id="IPR023201">
    <property type="entry name" value="SecY_dom_sf"/>
</dbReference>
<dbReference type="NCBIfam" id="TIGR00967">
    <property type="entry name" value="3a0501s007"/>
    <property type="match status" value="1"/>
</dbReference>
<dbReference type="PANTHER" id="PTHR10906">
    <property type="entry name" value="SECY/SEC61-ALPHA FAMILY MEMBER"/>
    <property type="match status" value="1"/>
</dbReference>
<dbReference type="Pfam" id="PF00344">
    <property type="entry name" value="SecY"/>
    <property type="match status" value="1"/>
</dbReference>
<dbReference type="PIRSF" id="PIRSF004557">
    <property type="entry name" value="SecY"/>
    <property type="match status" value="1"/>
</dbReference>
<dbReference type="PRINTS" id="PR00303">
    <property type="entry name" value="SECYTRNLCASE"/>
</dbReference>
<dbReference type="SUPFAM" id="SSF103491">
    <property type="entry name" value="Preprotein translocase SecY subunit"/>
    <property type="match status" value="1"/>
</dbReference>
<dbReference type="PROSITE" id="PS00755">
    <property type="entry name" value="SECY_1"/>
    <property type="match status" value="1"/>
</dbReference>
<dbReference type="PROSITE" id="PS00756">
    <property type="entry name" value="SECY_2"/>
    <property type="match status" value="1"/>
</dbReference>
<evidence type="ECO:0000255" key="1">
    <source>
        <dbReference type="HAMAP-Rule" id="MF_01465"/>
    </source>
</evidence>
<proteinExistence type="inferred from homology"/>
<reference key="1">
    <citation type="journal article" date="1997" name="Nature">
        <title>Genomic sequence of a Lyme disease spirochaete, Borrelia burgdorferi.</title>
        <authorList>
            <person name="Fraser C.M."/>
            <person name="Casjens S."/>
            <person name="Huang W.M."/>
            <person name="Sutton G.G."/>
            <person name="Clayton R.A."/>
            <person name="Lathigra R."/>
            <person name="White O."/>
            <person name="Ketchum K.A."/>
            <person name="Dodson R.J."/>
            <person name="Hickey E.K."/>
            <person name="Gwinn M.L."/>
            <person name="Dougherty B.A."/>
            <person name="Tomb J.-F."/>
            <person name="Fleischmann R.D."/>
            <person name="Richardson D.L."/>
            <person name="Peterson J.D."/>
            <person name="Kerlavage A.R."/>
            <person name="Quackenbush J."/>
            <person name="Salzberg S.L."/>
            <person name="Hanson M."/>
            <person name="van Vugt R."/>
            <person name="Palmer N."/>
            <person name="Adams M.D."/>
            <person name="Gocayne J.D."/>
            <person name="Weidman J.F."/>
            <person name="Utterback T.R."/>
            <person name="Watthey L."/>
            <person name="McDonald L.A."/>
            <person name="Artiach P."/>
            <person name="Bowman C."/>
            <person name="Garland S.A."/>
            <person name="Fujii C."/>
            <person name="Cotton M.D."/>
            <person name="Horst K."/>
            <person name="Roberts K.M."/>
            <person name="Hatch B."/>
            <person name="Smith H.O."/>
            <person name="Venter J.C."/>
        </authorList>
    </citation>
    <scope>NUCLEOTIDE SEQUENCE [LARGE SCALE GENOMIC DNA]</scope>
    <source>
        <strain>ATCC 35210 / DSM 4680 / CIP 102532 / B31</strain>
    </source>
</reference>
<keyword id="KW-0997">Cell inner membrane</keyword>
<keyword id="KW-1003">Cell membrane</keyword>
<keyword id="KW-0472">Membrane</keyword>
<keyword id="KW-0653">Protein transport</keyword>
<keyword id="KW-1185">Reference proteome</keyword>
<keyword id="KW-0811">Translocation</keyword>
<keyword id="KW-0812">Transmembrane</keyword>
<keyword id="KW-1133">Transmembrane helix</keyword>
<keyword id="KW-0813">Transport</keyword>
<comment type="function">
    <text evidence="1">The central subunit of the protein translocation channel SecYEG. Consists of two halves formed by TMs 1-5 and 6-10. These two domains form a lateral gate at the front which open onto the bilayer between TMs 2 and 7, and are clamped together by SecE at the back. The channel is closed by both a pore ring composed of hydrophobic SecY resides and a short helix (helix 2A) on the extracellular side of the membrane which forms a plug. The plug probably moves laterally to allow the channel to open. The ring and the pore may move independently.</text>
</comment>
<comment type="subunit">
    <text evidence="1">Component of the Sec protein translocase complex. Heterotrimer consisting of SecY, SecE and SecG subunits. The heterotrimers can form oligomers, although 1 heterotrimer is thought to be able to translocate proteins. Interacts with the ribosome. Interacts with SecDF, and other proteins may be involved. Interacts with SecA.</text>
</comment>
<comment type="subcellular location">
    <subcellularLocation>
        <location evidence="1">Cell inner membrane</location>
        <topology evidence="1">Multi-pass membrane protein</topology>
    </subcellularLocation>
</comment>
<comment type="similarity">
    <text evidence="1">Belongs to the SecY/SEC61-alpha family.</text>
</comment>
<name>SECY_BORBU</name>
<sequence length="434" mass="48610">MKELFLSLFTVKDLRNKFLFTLFVLFLFRVGSYLPIPGIDSVALKSYFKSQSDFSIANYFDFFSGGAFSNFSIFMLSIGPYISASIIVQLLVYSFPSLKKMQEGDGGRQKTKKYTKYLTIVAAVVQGYATSLYAKGIPGAVTIPFYRYIFVAILTVTTGTFILLWFGEQINQRGVGNGTSLIIFSGIVVRLQAALFNLFQSMQDPSQNVNPVFVILIISIFILVVILIIYEYKAQMRIAIHYARANSNNTVSSYLPIKLNPSGVLPVIFASVLITLPLQILSGFAETSSIARQILSYLRPNGFYYTFLNVILIIGFTYFYSKIQLSPKDISNNIRKNGGTIPGIKSDEMEKYLDEIMNKTLFSGSIFLSIIAIIPFLVQNIFRFPHDVSRIMGGSSLLIMVGVALDTLIHIDAYLKTQGFSHGNKKNYAFLQKI</sequence>
<organism>
    <name type="scientific">Borreliella burgdorferi (strain ATCC 35210 / DSM 4680 / CIP 102532 / B31)</name>
    <name type="common">Borrelia burgdorferi</name>
    <dbReference type="NCBI Taxonomy" id="224326"/>
    <lineage>
        <taxon>Bacteria</taxon>
        <taxon>Pseudomonadati</taxon>
        <taxon>Spirochaetota</taxon>
        <taxon>Spirochaetia</taxon>
        <taxon>Spirochaetales</taxon>
        <taxon>Borreliaceae</taxon>
        <taxon>Borreliella</taxon>
    </lineage>
</organism>
<gene>
    <name evidence="1" type="primary">secY</name>
    <name type="ordered locus">BB_0498</name>
</gene>
<protein>
    <recommendedName>
        <fullName evidence="1">Protein translocase subunit SecY</fullName>
    </recommendedName>
</protein>
<feature type="chain" id="PRO_0000131712" description="Protein translocase subunit SecY">
    <location>
        <begin position="1"/>
        <end position="434"/>
    </location>
</feature>
<feature type="transmembrane region" description="Helical" evidence="1">
    <location>
        <begin position="19"/>
        <end position="39"/>
    </location>
</feature>
<feature type="transmembrane region" description="Helical" evidence="1">
    <location>
        <begin position="73"/>
        <end position="93"/>
    </location>
</feature>
<feature type="transmembrane region" description="Helical" evidence="1">
    <location>
        <begin position="117"/>
        <end position="137"/>
    </location>
</feature>
<feature type="transmembrane region" description="Helical" evidence="1">
    <location>
        <begin position="148"/>
        <end position="168"/>
    </location>
</feature>
<feature type="transmembrane region" description="Helical" evidence="1">
    <location>
        <begin position="179"/>
        <end position="199"/>
    </location>
</feature>
<feature type="transmembrane region" description="Helical" evidence="1">
    <location>
        <begin position="209"/>
        <end position="229"/>
    </location>
</feature>
<feature type="transmembrane region" description="Helical" evidence="1">
    <location>
        <begin position="264"/>
        <end position="284"/>
    </location>
</feature>
<feature type="transmembrane region" description="Helical" evidence="1">
    <location>
        <begin position="300"/>
        <end position="320"/>
    </location>
</feature>
<feature type="transmembrane region" description="Helical" evidence="1">
    <location>
        <begin position="362"/>
        <end position="382"/>
    </location>
</feature>
<feature type="transmembrane region" description="Helical" evidence="1">
    <location>
        <begin position="391"/>
        <end position="411"/>
    </location>
</feature>
<accession>O51451</accession>